<name>RL332_MYCSK</name>
<accession>A1UME8</accession>
<reference key="1">
    <citation type="submission" date="2006-12" db="EMBL/GenBank/DDBJ databases">
        <title>Complete sequence of chromosome of Mycobacterium sp. KMS.</title>
        <authorList>
            <consortium name="US DOE Joint Genome Institute"/>
            <person name="Copeland A."/>
            <person name="Lucas S."/>
            <person name="Lapidus A."/>
            <person name="Barry K."/>
            <person name="Detter J.C."/>
            <person name="Glavina del Rio T."/>
            <person name="Hammon N."/>
            <person name="Israni S."/>
            <person name="Dalin E."/>
            <person name="Tice H."/>
            <person name="Pitluck S."/>
            <person name="Kiss H."/>
            <person name="Brettin T."/>
            <person name="Bruce D."/>
            <person name="Han C."/>
            <person name="Tapia R."/>
            <person name="Gilna P."/>
            <person name="Schmutz J."/>
            <person name="Larimer F."/>
            <person name="Land M."/>
            <person name="Hauser L."/>
            <person name="Kyrpides N."/>
            <person name="Mikhailova N."/>
            <person name="Miller C.D."/>
            <person name="Richardson P."/>
        </authorList>
    </citation>
    <scope>NUCLEOTIDE SEQUENCE [LARGE SCALE GENOMIC DNA]</scope>
    <source>
        <strain>KMS</strain>
    </source>
</reference>
<sequence>MARNEIRPIVKLRSTAGTGYTYVTRKNRRNDPDRLMLKKCDPVVRRHVDFREER</sequence>
<dbReference type="EMBL" id="CP000518">
    <property type="protein sequence ID" value="ABL94006.1"/>
    <property type="molecule type" value="Genomic_DNA"/>
</dbReference>
<dbReference type="SMR" id="A1UME8"/>
<dbReference type="STRING" id="189918.Mkms_4816"/>
<dbReference type="KEGG" id="mkm:Mkms_4816"/>
<dbReference type="HOGENOM" id="CLU_190949_1_1_11"/>
<dbReference type="OrthoDB" id="21586at2"/>
<dbReference type="GO" id="GO:0022625">
    <property type="term" value="C:cytosolic large ribosomal subunit"/>
    <property type="evidence" value="ECO:0007669"/>
    <property type="project" value="TreeGrafter"/>
</dbReference>
<dbReference type="GO" id="GO:0003735">
    <property type="term" value="F:structural constituent of ribosome"/>
    <property type="evidence" value="ECO:0007669"/>
    <property type="project" value="InterPro"/>
</dbReference>
<dbReference type="GO" id="GO:0006412">
    <property type="term" value="P:translation"/>
    <property type="evidence" value="ECO:0007669"/>
    <property type="project" value="UniProtKB-UniRule"/>
</dbReference>
<dbReference type="FunFam" id="2.20.28.120:FF:000002">
    <property type="entry name" value="50S ribosomal protein L33"/>
    <property type="match status" value="1"/>
</dbReference>
<dbReference type="Gene3D" id="2.20.28.120">
    <property type="entry name" value="Ribosomal protein L33"/>
    <property type="match status" value="1"/>
</dbReference>
<dbReference type="HAMAP" id="MF_00294">
    <property type="entry name" value="Ribosomal_bL33"/>
    <property type="match status" value="1"/>
</dbReference>
<dbReference type="InterPro" id="IPR001705">
    <property type="entry name" value="Ribosomal_bL33"/>
</dbReference>
<dbReference type="InterPro" id="IPR038584">
    <property type="entry name" value="Ribosomal_bL33_sf"/>
</dbReference>
<dbReference type="InterPro" id="IPR011332">
    <property type="entry name" value="Ribosomal_zn-bd"/>
</dbReference>
<dbReference type="NCBIfam" id="NF001860">
    <property type="entry name" value="PRK00595.1"/>
    <property type="match status" value="1"/>
</dbReference>
<dbReference type="NCBIfam" id="TIGR01023">
    <property type="entry name" value="rpmG_bact"/>
    <property type="match status" value="1"/>
</dbReference>
<dbReference type="PANTHER" id="PTHR15238">
    <property type="entry name" value="54S RIBOSOMAL PROTEIN L39, MITOCHONDRIAL"/>
    <property type="match status" value="1"/>
</dbReference>
<dbReference type="PANTHER" id="PTHR15238:SF1">
    <property type="entry name" value="LARGE RIBOSOMAL SUBUNIT PROTEIN BL33M"/>
    <property type="match status" value="1"/>
</dbReference>
<dbReference type="Pfam" id="PF00471">
    <property type="entry name" value="Ribosomal_L33"/>
    <property type="match status" value="1"/>
</dbReference>
<dbReference type="SUPFAM" id="SSF57829">
    <property type="entry name" value="Zn-binding ribosomal proteins"/>
    <property type="match status" value="1"/>
</dbReference>
<comment type="similarity">
    <text evidence="1">Belongs to the bacterial ribosomal protein bL33 family.</text>
</comment>
<feature type="chain" id="PRO_0000356559" description="Large ribosomal subunit protein bL33B">
    <location>
        <begin position="1"/>
        <end position="54"/>
    </location>
</feature>
<protein>
    <recommendedName>
        <fullName evidence="1">Large ribosomal subunit protein bL33B</fullName>
    </recommendedName>
    <alternativeName>
        <fullName evidence="1">50S ribosomal protein L33 2</fullName>
    </alternativeName>
</protein>
<gene>
    <name evidence="1" type="primary">rpmG2</name>
    <name type="ordered locus">Mkms_4816</name>
</gene>
<organism>
    <name type="scientific">Mycobacterium sp. (strain KMS)</name>
    <dbReference type="NCBI Taxonomy" id="189918"/>
    <lineage>
        <taxon>Bacteria</taxon>
        <taxon>Bacillati</taxon>
        <taxon>Actinomycetota</taxon>
        <taxon>Actinomycetes</taxon>
        <taxon>Mycobacteriales</taxon>
        <taxon>Mycobacteriaceae</taxon>
        <taxon>Mycobacterium</taxon>
    </lineage>
</organism>
<proteinExistence type="inferred from homology"/>
<keyword id="KW-0687">Ribonucleoprotein</keyword>
<keyword id="KW-0689">Ribosomal protein</keyword>
<evidence type="ECO:0000255" key="1">
    <source>
        <dbReference type="HAMAP-Rule" id="MF_00294"/>
    </source>
</evidence>